<dbReference type="EC" id="1.8.-.-"/>
<dbReference type="EMBL" id="AC008047">
    <property type="protein sequence ID" value="AAF19700.1"/>
    <property type="status" value="ALT_SEQ"/>
    <property type="molecule type" value="Genomic_DNA"/>
</dbReference>
<dbReference type="EMBL" id="AC022355">
    <property type="protein sequence ID" value="AAG52151.1"/>
    <property type="status" value="ALT_SEQ"/>
    <property type="molecule type" value="Genomic_DNA"/>
</dbReference>
<dbReference type="EMBL" id="CP002684">
    <property type="protein sequence ID" value="AEE34091.1"/>
    <property type="molecule type" value="Genomic_DNA"/>
</dbReference>
<dbReference type="RefSeq" id="NP_176526.1">
    <property type="nucleotide sequence ID" value="NM_105016.2"/>
</dbReference>
<dbReference type="SMR" id="Q9C8U0"/>
<dbReference type="FunCoup" id="Q9C8U0">
    <property type="interactions" value="472"/>
</dbReference>
<dbReference type="STRING" id="3702.Q9C8U0"/>
<dbReference type="PaxDb" id="3702-AT1G63370.1"/>
<dbReference type="DNASU" id="842643"/>
<dbReference type="EnsemblPlants" id="AT1G63370.1">
    <property type="protein sequence ID" value="AT1G63370.1"/>
    <property type="gene ID" value="AT1G63370"/>
</dbReference>
<dbReference type="GeneID" id="842643"/>
<dbReference type="Gramene" id="AT1G63370.1">
    <property type="protein sequence ID" value="AT1G63370.1"/>
    <property type="gene ID" value="AT1G63370"/>
</dbReference>
<dbReference type="KEGG" id="ath:AT1G63370"/>
<dbReference type="Araport" id="AT1G63370"/>
<dbReference type="TAIR" id="AT1G63370"/>
<dbReference type="eggNOG" id="KOG1399">
    <property type="taxonomic scope" value="Eukaryota"/>
</dbReference>
<dbReference type="HOGENOM" id="CLU_006909_3_0_1"/>
<dbReference type="InParanoid" id="Q9C8U0"/>
<dbReference type="OMA" id="QWAYYDE"/>
<dbReference type="PhylomeDB" id="Q9C8U0"/>
<dbReference type="BioCyc" id="ARA:AT1G63370-MONOMER"/>
<dbReference type="PRO" id="PR:Q9C8U0"/>
<dbReference type="Proteomes" id="UP000006548">
    <property type="component" value="Chromosome 1"/>
</dbReference>
<dbReference type="ExpressionAtlas" id="Q9C8U0">
    <property type="expression patterns" value="baseline and differential"/>
</dbReference>
<dbReference type="GO" id="GO:0050660">
    <property type="term" value="F:flavin adenine dinucleotide binding"/>
    <property type="evidence" value="ECO:0007669"/>
    <property type="project" value="InterPro"/>
</dbReference>
<dbReference type="GO" id="GO:0004499">
    <property type="term" value="F:N,N-dimethylaniline monooxygenase activity"/>
    <property type="evidence" value="ECO:0007669"/>
    <property type="project" value="InterPro"/>
</dbReference>
<dbReference type="GO" id="GO:0050661">
    <property type="term" value="F:NADP binding"/>
    <property type="evidence" value="ECO:0007669"/>
    <property type="project" value="InterPro"/>
</dbReference>
<dbReference type="FunFam" id="3.50.50.60:FF:000099">
    <property type="entry name" value="Flavin-containing monooxygenase"/>
    <property type="match status" value="1"/>
</dbReference>
<dbReference type="Gene3D" id="3.50.50.60">
    <property type="entry name" value="FAD/NAD(P)-binding domain"/>
    <property type="match status" value="2"/>
</dbReference>
<dbReference type="InterPro" id="IPR036188">
    <property type="entry name" value="FAD/NAD-bd_sf"/>
</dbReference>
<dbReference type="InterPro" id="IPR000960">
    <property type="entry name" value="Flavin_mOase"/>
</dbReference>
<dbReference type="InterPro" id="IPR020946">
    <property type="entry name" value="Flavin_mOase-like"/>
</dbReference>
<dbReference type="InterPro" id="IPR050346">
    <property type="entry name" value="FMO-like"/>
</dbReference>
<dbReference type="PANTHER" id="PTHR23023">
    <property type="entry name" value="DIMETHYLANILINE MONOOXYGENASE"/>
    <property type="match status" value="1"/>
</dbReference>
<dbReference type="Pfam" id="PF00743">
    <property type="entry name" value="FMO-like"/>
    <property type="match status" value="2"/>
</dbReference>
<dbReference type="PIRSF" id="PIRSF000332">
    <property type="entry name" value="FMO"/>
    <property type="match status" value="1"/>
</dbReference>
<dbReference type="PRINTS" id="PR00370">
    <property type="entry name" value="FMOXYGENASE"/>
</dbReference>
<dbReference type="SUPFAM" id="SSF51905">
    <property type="entry name" value="FAD/NAD(P)-binding domain"/>
    <property type="match status" value="2"/>
</dbReference>
<evidence type="ECO:0000250" key="1"/>
<evidence type="ECO:0000255" key="2"/>
<evidence type="ECO:0000305" key="3"/>
<comment type="function">
    <text evidence="1">Catalyzes the conversion of methylthioalkyl glucosinolates of any chain length into methylsulfinylalkyl glucosinolates.</text>
</comment>
<comment type="cofactor">
    <cofactor evidence="1">
        <name>FAD</name>
        <dbReference type="ChEBI" id="CHEBI:57692"/>
    </cofactor>
</comment>
<comment type="similarity">
    <text evidence="3">Belongs to the FMO family.</text>
</comment>
<comment type="sequence caution" evidence="3">
    <conflict type="erroneous gene model prediction">
        <sequence resource="EMBL-CDS" id="AAF19700"/>
    </conflict>
</comment>
<comment type="sequence caution" evidence="3">
    <conflict type="erroneous gene model prediction">
        <sequence resource="EMBL-CDS" id="AAG52151"/>
    </conflict>
</comment>
<feature type="chain" id="PRO_0000401960" description="Flavin-containing monooxygenase FMO GS-OX-like 5">
    <location>
        <begin position="1"/>
        <end position="450"/>
    </location>
</feature>
<feature type="binding site" evidence="2">
    <location>
        <begin position="17"/>
        <end position="22"/>
    </location>
    <ligand>
        <name>FAD</name>
        <dbReference type="ChEBI" id="CHEBI:57692"/>
    </ligand>
</feature>
<feature type="binding site" evidence="2">
    <location>
        <begin position="215"/>
        <end position="220"/>
    </location>
    <ligand>
        <name>NADP(+)</name>
        <dbReference type="ChEBI" id="CHEBI:58349"/>
    </ligand>
</feature>
<accession>Q9C8U0</accession>
<accession>Q9SH23</accession>
<keyword id="KW-0274">FAD</keyword>
<keyword id="KW-0285">Flavoprotein</keyword>
<keyword id="KW-0503">Monooxygenase</keyword>
<keyword id="KW-0521">NADP</keyword>
<keyword id="KW-0560">Oxidoreductase</keyword>
<keyword id="KW-1185">Reference proteome</keyword>
<proteinExistence type="evidence at transcript level"/>
<organism>
    <name type="scientific">Arabidopsis thaliana</name>
    <name type="common">Mouse-ear cress</name>
    <dbReference type="NCBI Taxonomy" id="3702"/>
    <lineage>
        <taxon>Eukaryota</taxon>
        <taxon>Viridiplantae</taxon>
        <taxon>Streptophyta</taxon>
        <taxon>Embryophyta</taxon>
        <taxon>Tracheophyta</taxon>
        <taxon>Spermatophyta</taxon>
        <taxon>Magnoliopsida</taxon>
        <taxon>eudicotyledons</taxon>
        <taxon>Gunneridae</taxon>
        <taxon>Pentapetalae</taxon>
        <taxon>rosids</taxon>
        <taxon>malvids</taxon>
        <taxon>Brassicales</taxon>
        <taxon>Brassicaceae</taxon>
        <taxon>Camelineae</taxon>
        <taxon>Arabidopsis</taxon>
    </lineage>
</organism>
<gene>
    <name type="ordered locus">At1g63370</name>
    <name type="ORF">F2K11.25</name>
    <name type="ORF">F9N12.1</name>
</gene>
<protein>
    <recommendedName>
        <fullName>Flavin-containing monooxygenase FMO GS-OX-like 5</fullName>
        <ecNumber>1.8.-.-</ecNumber>
    </recommendedName>
    <alternativeName>
        <fullName>Flavin-monooxygenase glucosinolate S-oxygenase-like 5</fullName>
    </alternativeName>
</protein>
<name>GSXL5_ARATH</name>
<sequence length="450" mass="51239">MAPALSPTRSHHVAVIGAGPAGLVAARELRREGHSVVVFEKQKQVGGTWIYTDEVESDPLSVDPTRSVVHSSVYRSLRINGTRECTGYRDFPFVVRSGVSRDRRRFPSHGEVLAYLKDFAKEFGIEEMVRFETEVVKVSPAAEEGIGKWRIESTEKEKKVRRDEIYDAVVVCNGHYVEPRLAQIPGISSWPGKEMHSHNYRIPEPFRDKVAVLIGNSSSAEDISRDIARVAKEVHVACRSNPADTFIKQTGYNNLWTHSMIESVHEDGSVVYQNGKTISVDIIMHCTGYKYHFPFLDTNGIVTVDDNRVGPLYKDVFPPAFAPWLSFIGIPWQVLPFPMFELQSKWIAGVLSGRIPLPSKEDMMIEIKTFYSTLEVQGIPKRYTHRMGNTQFEYDNWLASQCGCSETEEWRKEMCLANGVRKEAHPETYRDEWDDHHLVSEAYQDFSLYS</sequence>
<reference key="1">
    <citation type="journal article" date="2000" name="Nature">
        <title>Sequence and analysis of chromosome 1 of the plant Arabidopsis thaliana.</title>
        <authorList>
            <person name="Theologis A."/>
            <person name="Ecker J.R."/>
            <person name="Palm C.J."/>
            <person name="Federspiel N.A."/>
            <person name="Kaul S."/>
            <person name="White O."/>
            <person name="Alonso J."/>
            <person name="Altafi H."/>
            <person name="Araujo R."/>
            <person name="Bowman C.L."/>
            <person name="Brooks S.Y."/>
            <person name="Buehler E."/>
            <person name="Chan A."/>
            <person name="Chao Q."/>
            <person name="Chen H."/>
            <person name="Cheuk R.F."/>
            <person name="Chin C.W."/>
            <person name="Chung M.K."/>
            <person name="Conn L."/>
            <person name="Conway A.B."/>
            <person name="Conway A.R."/>
            <person name="Creasy T.H."/>
            <person name="Dewar K."/>
            <person name="Dunn P."/>
            <person name="Etgu P."/>
            <person name="Feldblyum T.V."/>
            <person name="Feng J.-D."/>
            <person name="Fong B."/>
            <person name="Fujii C.Y."/>
            <person name="Gill J.E."/>
            <person name="Goldsmith A.D."/>
            <person name="Haas B."/>
            <person name="Hansen N.F."/>
            <person name="Hughes B."/>
            <person name="Huizar L."/>
            <person name="Hunter J.L."/>
            <person name="Jenkins J."/>
            <person name="Johnson-Hopson C."/>
            <person name="Khan S."/>
            <person name="Khaykin E."/>
            <person name="Kim C.J."/>
            <person name="Koo H.L."/>
            <person name="Kremenetskaia I."/>
            <person name="Kurtz D.B."/>
            <person name="Kwan A."/>
            <person name="Lam B."/>
            <person name="Langin-Hooper S."/>
            <person name="Lee A."/>
            <person name="Lee J.M."/>
            <person name="Lenz C.A."/>
            <person name="Li J.H."/>
            <person name="Li Y.-P."/>
            <person name="Lin X."/>
            <person name="Liu S.X."/>
            <person name="Liu Z.A."/>
            <person name="Luros J.S."/>
            <person name="Maiti R."/>
            <person name="Marziali A."/>
            <person name="Militscher J."/>
            <person name="Miranda M."/>
            <person name="Nguyen M."/>
            <person name="Nierman W.C."/>
            <person name="Osborne B.I."/>
            <person name="Pai G."/>
            <person name="Peterson J."/>
            <person name="Pham P.K."/>
            <person name="Rizzo M."/>
            <person name="Rooney T."/>
            <person name="Rowley D."/>
            <person name="Sakano H."/>
            <person name="Salzberg S.L."/>
            <person name="Schwartz J.R."/>
            <person name="Shinn P."/>
            <person name="Southwick A.M."/>
            <person name="Sun H."/>
            <person name="Tallon L.J."/>
            <person name="Tambunga G."/>
            <person name="Toriumi M.J."/>
            <person name="Town C.D."/>
            <person name="Utterback T."/>
            <person name="Van Aken S."/>
            <person name="Vaysberg M."/>
            <person name="Vysotskaia V.S."/>
            <person name="Walker M."/>
            <person name="Wu D."/>
            <person name="Yu G."/>
            <person name="Fraser C.M."/>
            <person name="Venter J.C."/>
            <person name="Davis R.W."/>
        </authorList>
    </citation>
    <scope>NUCLEOTIDE SEQUENCE [LARGE SCALE GENOMIC DNA]</scope>
    <source>
        <strain>cv. Columbia</strain>
    </source>
</reference>
<reference key="2">
    <citation type="journal article" date="2017" name="Plant J.">
        <title>Araport11: a complete reannotation of the Arabidopsis thaliana reference genome.</title>
        <authorList>
            <person name="Cheng C.Y."/>
            <person name="Krishnakumar V."/>
            <person name="Chan A.P."/>
            <person name="Thibaud-Nissen F."/>
            <person name="Schobel S."/>
            <person name="Town C.D."/>
        </authorList>
    </citation>
    <scope>GENOME REANNOTATION</scope>
    <source>
        <strain>cv. Columbia</strain>
    </source>
</reference>
<reference key="3">
    <citation type="journal article" date="2007" name="Plant J.">
        <title>Identification of a flavin-monooxygenase as the S-oxygenating enzyme in aliphatic glucosinolate biosynthesis in Arabidopsis.</title>
        <authorList>
            <person name="Hansen B.G."/>
            <person name="Kliebenstein D.J."/>
            <person name="Halkier B.A."/>
        </authorList>
    </citation>
    <scope>GENE FAMILY</scope>
    <source>
        <strain>cv. Columbia</strain>
    </source>
</reference>